<name>F16A1_HALMA</name>
<dbReference type="EC" id="3.1.3.11" evidence="1"/>
<dbReference type="EMBL" id="AY596297">
    <property type="protein sequence ID" value="AAV45761.1"/>
    <property type="molecule type" value="Genomic_DNA"/>
</dbReference>
<dbReference type="RefSeq" id="WP_004961643.1">
    <property type="nucleotide sequence ID" value="NZ_CP039138.1"/>
</dbReference>
<dbReference type="SMR" id="Q5V3Z1"/>
<dbReference type="STRING" id="272569.rrnAC0772"/>
<dbReference type="PaxDb" id="272569-rrnAC0772"/>
<dbReference type="EnsemblBacteria" id="AAV45761">
    <property type="protein sequence ID" value="AAV45761"/>
    <property type="gene ID" value="rrnAC0772"/>
</dbReference>
<dbReference type="KEGG" id="hma:rrnAC0772"/>
<dbReference type="PATRIC" id="fig|272569.17.peg.1514"/>
<dbReference type="eggNOG" id="arCOG04603">
    <property type="taxonomic scope" value="Archaea"/>
</dbReference>
<dbReference type="HOGENOM" id="CLU_039977_3_0_2"/>
<dbReference type="UniPathway" id="UPA00138"/>
<dbReference type="Proteomes" id="UP000001169">
    <property type="component" value="Chromosome I"/>
</dbReference>
<dbReference type="GO" id="GO:0005737">
    <property type="term" value="C:cytoplasm"/>
    <property type="evidence" value="ECO:0007669"/>
    <property type="project" value="UniProtKB-SubCell"/>
</dbReference>
<dbReference type="GO" id="GO:0042132">
    <property type="term" value="F:fructose 1,6-bisphosphate 1-phosphatase activity"/>
    <property type="evidence" value="ECO:0007669"/>
    <property type="project" value="UniProtKB-UniRule"/>
</dbReference>
<dbReference type="GO" id="GO:0000287">
    <property type="term" value="F:magnesium ion binding"/>
    <property type="evidence" value="ECO:0007669"/>
    <property type="project" value="UniProtKB-UniRule"/>
</dbReference>
<dbReference type="GO" id="GO:0030388">
    <property type="term" value="P:fructose 1,6-bisphosphate metabolic process"/>
    <property type="evidence" value="ECO:0007669"/>
    <property type="project" value="TreeGrafter"/>
</dbReference>
<dbReference type="GO" id="GO:0006002">
    <property type="term" value="P:fructose 6-phosphate metabolic process"/>
    <property type="evidence" value="ECO:0007669"/>
    <property type="project" value="TreeGrafter"/>
</dbReference>
<dbReference type="GO" id="GO:0006000">
    <property type="term" value="P:fructose metabolic process"/>
    <property type="evidence" value="ECO:0007669"/>
    <property type="project" value="TreeGrafter"/>
</dbReference>
<dbReference type="GO" id="GO:0006094">
    <property type="term" value="P:gluconeogenesis"/>
    <property type="evidence" value="ECO:0007669"/>
    <property type="project" value="UniProtKB-UniRule"/>
</dbReference>
<dbReference type="GO" id="GO:0005986">
    <property type="term" value="P:sucrose biosynthetic process"/>
    <property type="evidence" value="ECO:0007669"/>
    <property type="project" value="TreeGrafter"/>
</dbReference>
<dbReference type="Gene3D" id="3.40.190.80">
    <property type="match status" value="1"/>
</dbReference>
<dbReference type="Gene3D" id="3.30.540.10">
    <property type="entry name" value="Fructose-1,6-Bisphosphatase, subunit A, domain 1"/>
    <property type="match status" value="1"/>
</dbReference>
<dbReference type="HAMAP" id="MF_01855">
    <property type="entry name" value="FBPase_class1"/>
    <property type="match status" value="1"/>
</dbReference>
<dbReference type="InterPro" id="IPR044015">
    <property type="entry name" value="FBPase_C_dom"/>
</dbReference>
<dbReference type="InterPro" id="IPR000146">
    <property type="entry name" value="FBPase_class-1"/>
</dbReference>
<dbReference type="InterPro" id="IPR033391">
    <property type="entry name" value="FBPase_N"/>
</dbReference>
<dbReference type="InterPro" id="IPR028343">
    <property type="entry name" value="FBPtase"/>
</dbReference>
<dbReference type="NCBIfam" id="NF006785">
    <property type="entry name" value="PRK09293.3-2"/>
    <property type="match status" value="1"/>
</dbReference>
<dbReference type="PANTHER" id="PTHR11556">
    <property type="entry name" value="FRUCTOSE-1,6-BISPHOSPHATASE-RELATED"/>
    <property type="match status" value="1"/>
</dbReference>
<dbReference type="PANTHER" id="PTHR11556:SF35">
    <property type="entry name" value="SEDOHEPTULOSE-1,7-BISPHOSPHATASE, CHLOROPLASTIC"/>
    <property type="match status" value="1"/>
</dbReference>
<dbReference type="Pfam" id="PF00316">
    <property type="entry name" value="FBPase"/>
    <property type="match status" value="1"/>
</dbReference>
<dbReference type="Pfam" id="PF18913">
    <property type="entry name" value="FBPase_C"/>
    <property type="match status" value="1"/>
</dbReference>
<dbReference type="PIRSF" id="PIRSF500210">
    <property type="entry name" value="FBPtase"/>
    <property type="match status" value="1"/>
</dbReference>
<dbReference type="PIRSF" id="PIRSF000904">
    <property type="entry name" value="FBPtase_SBPase"/>
    <property type="match status" value="1"/>
</dbReference>
<dbReference type="PRINTS" id="PR00115">
    <property type="entry name" value="F16BPHPHTASE"/>
</dbReference>
<dbReference type="SUPFAM" id="SSF56655">
    <property type="entry name" value="Carbohydrate phosphatase"/>
    <property type="match status" value="1"/>
</dbReference>
<evidence type="ECO:0000255" key="1">
    <source>
        <dbReference type="HAMAP-Rule" id="MF_01855"/>
    </source>
</evidence>
<reference key="1">
    <citation type="journal article" date="2004" name="Genome Res.">
        <title>Genome sequence of Haloarcula marismortui: a halophilic archaeon from the Dead Sea.</title>
        <authorList>
            <person name="Baliga N.S."/>
            <person name="Bonneau R."/>
            <person name="Facciotti M.T."/>
            <person name="Pan M."/>
            <person name="Glusman G."/>
            <person name="Deutsch E.W."/>
            <person name="Shannon P."/>
            <person name="Chiu Y."/>
            <person name="Weng R.S."/>
            <person name="Gan R.R."/>
            <person name="Hung P."/>
            <person name="Date S.V."/>
            <person name="Marcotte E."/>
            <person name="Hood L."/>
            <person name="Ng W.V."/>
        </authorList>
    </citation>
    <scope>NUCLEOTIDE SEQUENCE [LARGE SCALE GENOMIC DNA]</scope>
    <source>
        <strain>ATCC 43049 / DSM 3752 / JCM 8966 / VKM B-1809</strain>
    </source>
</reference>
<organism>
    <name type="scientific">Haloarcula marismortui (strain ATCC 43049 / DSM 3752 / JCM 8966 / VKM B-1809)</name>
    <name type="common">Halobacterium marismortui</name>
    <dbReference type="NCBI Taxonomy" id="272569"/>
    <lineage>
        <taxon>Archaea</taxon>
        <taxon>Methanobacteriati</taxon>
        <taxon>Methanobacteriota</taxon>
        <taxon>Stenosarchaea group</taxon>
        <taxon>Halobacteria</taxon>
        <taxon>Halobacteriales</taxon>
        <taxon>Haloarculaceae</taxon>
        <taxon>Haloarcula</taxon>
    </lineage>
</organism>
<proteinExistence type="inferred from homology"/>
<accession>Q5V3Z1</accession>
<gene>
    <name evidence="1" type="primary">fbp1</name>
    <name type="ordered locus">rrnAC0772</name>
</gene>
<keyword id="KW-0119">Carbohydrate metabolism</keyword>
<keyword id="KW-0963">Cytoplasm</keyword>
<keyword id="KW-0378">Hydrolase</keyword>
<keyword id="KW-0460">Magnesium</keyword>
<keyword id="KW-0479">Metal-binding</keyword>
<keyword id="KW-1185">Reference proteome</keyword>
<feature type="chain" id="PRO_0000364768" description="Fructose-1,6-bisphosphatase class 1 1">
    <location>
        <begin position="1"/>
        <end position="291"/>
    </location>
</feature>
<feature type="binding site" evidence="1">
    <location>
        <position position="78"/>
    </location>
    <ligand>
        <name>Mg(2+)</name>
        <dbReference type="ChEBI" id="CHEBI:18420"/>
        <label>1</label>
    </ligand>
</feature>
<feature type="binding site" evidence="1">
    <location>
        <position position="95"/>
    </location>
    <ligand>
        <name>Mg(2+)</name>
        <dbReference type="ChEBI" id="CHEBI:18420"/>
        <label>1</label>
    </ligand>
</feature>
<feature type="binding site" evidence="1">
    <location>
        <position position="95"/>
    </location>
    <ligand>
        <name>Mg(2+)</name>
        <dbReference type="ChEBI" id="CHEBI:18420"/>
        <label>2</label>
    </ligand>
</feature>
<feature type="binding site" evidence="1">
    <location>
        <position position="97"/>
    </location>
    <ligand>
        <name>Mg(2+)</name>
        <dbReference type="ChEBI" id="CHEBI:18420"/>
        <label>1</label>
    </ligand>
</feature>
<feature type="binding site" evidence="1">
    <location>
        <begin position="98"/>
        <end position="101"/>
    </location>
    <ligand>
        <name>substrate</name>
    </ligand>
</feature>
<feature type="binding site" evidence="1">
    <location>
        <position position="98"/>
    </location>
    <ligand>
        <name>Mg(2+)</name>
        <dbReference type="ChEBI" id="CHEBI:18420"/>
        <label>2</label>
    </ligand>
</feature>
<feature type="binding site" evidence="1">
    <location>
        <position position="203"/>
    </location>
    <ligand>
        <name>substrate</name>
    </ligand>
</feature>
<feature type="binding site" evidence="1">
    <location>
        <position position="233"/>
    </location>
    <ligand>
        <name>substrate</name>
    </ligand>
</feature>
<feature type="binding site" evidence="1">
    <location>
        <position position="239"/>
    </location>
    <ligand>
        <name>Mg(2+)</name>
        <dbReference type="ChEBI" id="CHEBI:18420"/>
        <label>2</label>
    </ligand>
</feature>
<sequence length="291" mass="31589">MSKSLDISTTEAEQTVTEVIDTIVATTPDVRRAVADYRGQSNSVNPTGDDQLAADLRADELFEQRVLGIDGVASYASEERADVKTTDGRLHVAMDPLDGSSNLEPNSGMGTIFGIYSEQPPTVGTNLLAAGFVIYGPITSMVVARDGSVREYILEDGDKRVVDDDVTVPEDPTVFGFGGGVDSWTDEFESYAEAVRHELKLRYGGAMVADINQVLTYGGIFSYPALESRPEGKLRVQFEGHPMAYILESAGGRSSDGDQSLLEIEPDELHERTPLYLGNDDLIDRLEANID</sequence>
<protein>
    <recommendedName>
        <fullName evidence="1">Fructose-1,6-bisphosphatase class 1 1</fullName>
        <shortName evidence="1">FBPase class 1 1</shortName>
        <ecNumber evidence="1">3.1.3.11</ecNumber>
    </recommendedName>
    <alternativeName>
        <fullName evidence="1">D-fructose-1,6-bisphosphate 1-phosphohydrolase class 1 1</fullName>
    </alternativeName>
</protein>
<comment type="catalytic activity">
    <reaction evidence="1">
        <text>beta-D-fructose 1,6-bisphosphate + H2O = beta-D-fructose 6-phosphate + phosphate</text>
        <dbReference type="Rhea" id="RHEA:11064"/>
        <dbReference type="ChEBI" id="CHEBI:15377"/>
        <dbReference type="ChEBI" id="CHEBI:32966"/>
        <dbReference type="ChEBI" id="CHEBI:43474"/>
        <dbReference type="ChEBI" id="CHEBI:57634"/>
        <dbReference type="EC" id="3.1.3.11"/>
    </reaction>
</comment>
<comment type="cofactor">
    <cofactor evidence="1">
        <name>Mg(2+)</name>
        <dbReference type="ChEBI" id="CHEBI:18420"/>
    </cofactor>
    <text evidence="1">Binds 2 magnesium ions per subunit.</text>
</comment>
<comment type="pathway">
    <text evidence="1">Carbohydrate biosynthesis; gluconeogenesis.</text>
</comment>
<comment type="subunit">
    <text evidence="1">Homotetramer.</text>
</comment>
<comment type="subcellular location">
    <subcellularLocation>
        <location evidence="1">Cytoplasm</location>
    </subcellularLocation>
</comment>
<comment type="similarity">
    <text evidence="1">Belongs to the FBPase class 1 family.</text>
</comment>